<proteinExistence type="inferred from homology"/>
<feature type="chain" id="PRO_0000023576" description="Uncharacterized PE-PGRS family protein PE_PGRS10">
    <location>
        <begin position="1"/>
        <end position="801"/>
    </location>
</feature>
<feature type="domain" description="PE" evidence="1">
    <location>
        <begin position="1"/>
        <end position="93"/>
    </location>
</feature>
<reference key="1">
    <citation type="journal article" date="1998" name="Nature">
        <title>Deciphering the biology of Mycobacterium tuberculosis from the complete genome sequence.</title>
        <authorList>
            <person name="Cole S.T."/>
            <person name="Brosch R."/>
            <person name="Parkhill J."/>
            <person name="Garnier T."/>
            <person name="Churcher C.M."/>
            <person name="Harris D.E."/>
            <person name="Gordon S.V."/>
            <person name="Eiglmeier K."/>
            <person name="Gas S."/>
            <person name="Barry C.E. III"/>
            <person name="Tekaia F."/>
            <person name="Badcock K."/>
            <person name="Basham D."/>
            <person name="Brown D."/>
            <person name="Chillingworth T."/>
            <person name="Connor R."/>
            <person name="Davies R.M."/>
            <person name="Devlin K."/>
            <person name="Feltwell T."/>
            <person name="Gentles S."/>
            <person name="Hamlin N."/>
            <person name="Holroyd S."/>
            <person name="Hornsby T."/>
            <person name="Jagels K."/>
            <person name="Krogh A."/>
            <person name="McLean J."/>
            <person name="Moule S."/>
            <person name="Murphy L.D."/>
            <person name="Oliver S."/>
            <person name="Osborne J."/>
            <person name="Quail M.A."/>
            <person name="Rajandream M.A."/>
            <person name="Rogers J."/>
            <person name="Rutter S."/>
            <person name="Seeger K."/>
            <person name="Skelton S."/>
            <person name="Squares S."/>
            <person name="Squares R."/>
            <person name="Sulston J.E."/>
            <person name="Taylor K."/>
            <person name="Whitehead S."/>
            <person name="Barrell B.G."/>
        </authorList>
    </citation>
    <scope>NUCLEOTIDE SEQUENCE [LARGE SCALE GENOMIC DNA]</scope>
    <source>
        <strain>ATCC 25618 / H37Rv</strain>
    </source>
</reference>
<evidence type="ECO:0000255" key="1"/>
<evidence type="ECO:0000305" key="2"/>
<sequence>MSWVMVSPELVVAAAADLAGIGSAISSANAAAAVNTTGLLTAGADEVSTAIAALFGAQGQAYQAASAQAAAFYAQFVQALSAGGGAYAAAEAAAVSPLLAPINAQFVAATGRPLIGNGANGAPGTGANGGPGGWLIGNGGAGGSGAPGAGAGGNGGAGGLFGSGGAGGASTDVAGGAGGAGGAGGNAGMLFGAAGVGGVGGFSNGGATGGAGGAGGAGGLFGAGRERGSGGSGNLTGGAGGAGGNAGTLATGDGGAGGTGGASRSGGFGGAGGAGGDAGMFFGSGGSGGAGGISKSVGDSAAGGAGGAPGLIGNGGNGGNGGASTGGGDGGPGGAGGTGVLIGNGGNGGSGGTGATLGKAGIGGTGGVLLGLDGFTAPASTSPLHTLQQDVINMVNDPFQTLTGRPLIGNGANGTPGTGADGGAGGWLFGNGGNGGQGTIGGVNGGAGGAGGAGGILFGTGGTGGSGGPGATGLGGIGGAGGAALLFGSGGAGGSGGAGAVGGNGGAGGNAGALLGAAGAGGAGGAGAVGGNGGAGGNGGLFANGGAGGPGGFGSPAGAGGIGGAGGNGGLFGAGGTGGAGGGSTLAGGAGGAGGNGGLFGAGGTGGAGSHSTAAGVSGGAGGAGGDAGLLSLGASGGAGGSGGSSLTAAGVVGGIGGAGGLLFGSGGAGGSGGFSNSGNGGAGGAGGDAGLLVGSGGAGGAGASATGAATGGDGGAGGKSGAFGLGGDGGAGGATGLSGAFHIGGKGGVGGSAVLIGNGGNGGNGGNSGNAGKSGGAPGPSGAGGAGGLLLGENGLNGLM</sequence>
<comment type="similarity">
    <text evidence="2">Belongs to the mycobacterial PE family. PGRS subfamily.</text>
</comment>
<organism>
    <name type="scientific">Mycobacterium tuberculosis (strain ATCC 25618 / H37Rv)</name>
    <dbReference type="NCBI Taxonomy" id="83332"/>
    <lineage>
        <taxon>Bacteria</taxon>
        <taxon>Bacillati</taxon>
        <taxon>Actinomycetota</taxon>
        <taxon>Actinomycetes</taxon>
        <taxon>Mycobacteriales</taxon>
        <taxon>Mycobacteriaceae</taxon>
        <taxon>Mycobacterium</taxon>
        <taxon>Mycobacterium tuberculosis complex</taxon>
    </lineage>
</organism>
<dbReference type="EMBL" id="AL123456">
    <property type="protein sequence ID" value="CCP43492.1"/>
    <property type="molecule type" value="Genomic_DNA"/>
</dbReference>
<dbReference type="PIR" id="F70824">
    <property type="entry name" value="F70824"/>
</dbReference>
<dbReference type="RefSeq" id="WP_010886085.1">
    <property type="nucleotide sequence ID" value="NC_000962.3"/>
</dbReference>
<dbReference type="RefSeq" id="YP_177751.1">
    <property type="nucleotide sequence ID" value="NC_000962.3"/>
</dbReference>
<dbReference type="STRING" id="83332.Rv0747"/>
<dbReference type="PaxDb" id="83332-Rv0747"/>
<dbReference type="GeneID" id="888662"/>
<dbReference type="KEGG" id="mtu:Rv0747"/>
<dbReference type="PATRIC" id="fig|83332.12.peg.834"/>
<dbReference type="TubercuList" id="Rv0747"/>
<dbReference type="eggNOG" id="COG3391">
    <property type="taxonomic scope" value="Bacteria"/>
</dbReference>
<dbReference type="InParanoid" id="P9WIG1"/>
<dbReference type="OrthoDB" id="4753956at2"/>
<dbReference type="Proteomes" id="UP000001584">
    <property type="component" value="Chromosome"/>
</dbReference>
<dbReference type="Gene3D" id="1.10.287.850">
    <property type="entry name" value="HP0062-like domain"/>
    <property type="match status" value="1"/>
</dbReference>
<dbReference type="InterPro" id="IPR000084">
    <property type="entry name" value="PE-PGRS_N"/>
</dbReference>
<dbReference type="Pfam" id="PF00934">
    <property type="entry name" value="PE"/>
    <property type="match status" value="1"/>
</dbReference>
<dbReference type="PRINTS" id="PR01228">
    <property type="entry name" value="EGGSHELL"/>
</dbReference>
<dbReference type="SUPFAM" id="SSF140459">
    <property type="entry name" value="PE/PPE dimer-like"/>
    <property type="match status" value="1"/>
</dbReference>
<protein>
    <recommendedName>
        <fullName>Uncharacterized PE-PGRS family protein PE_PGRS10</fullName>
    </recommendedName>
</protein>
<keyword id="KW-1185">Reference proteome</keyword>
<keyword id="KW-0677">Repeat</keyword>
<name>PG10_MYCTU</name>
<accession>P9WIG1</accession>
<accession>L0T7L2</accession>
<accession>O53810</accession>
<gene>
    <name type="primary">PE_PGRS10</name>
    <name type="ordered locus">Rv0747</name>
    <name type="ORF">MTV041.21</name>
</gene>